<accession>B4GY79</accession>
<evidence type="ECO:0000255" key="1">
    <source>
        <dbReference type="HAMAP-Rule" id="MF_03116"/>
    </source>
</evidence>
<protein>
    <recommendedName>
        <fullName evidence="1">Probable methylthioribulose-1-phosphate dehydratase</fullName>
        <shortName evidence="1">MTRu-1-P dehydratase</shortName>
        <ecNumber evidence="1">4.2.1.109</ecNumber>
    </recommendedName>
</protein>
<name>MTNB_DROPE</name>
<organism>
    <name type="scientific">Drosophila persimilis</name>
    <name type="common">Fruit fly</name>
    <dbReference type="NCBI Taxonomy" id="7234"/>
    <lineage>
        <taxon>Eukaryota</taxon>
        <taxon>Metazoa</taxon>
        <taxon>Ecdysozoa</taxon>
        <taxon>Arthropoda</taxon>
        <taxon>Hexapoda</taxon>
        <taxon>Insecta</taxon>
        <taxon>Pterygota</taxon>
        <taxon>Neoptera</taxon>
        <taxon>Endopterygota</taxon>
        <taxon>Diptera</taxon>
        <taxon>Brachycera</taxon>
        <taxon>Muscomorpha</taxon>
        <taxon>Ephydroidea</taxon>
        <taxon>Drosophilidae</taxon>
        <taxon>Drosophila</taxon>
        <taxon>Sophophora</taxon>
    </lineage>
</organism>
<comment type="function">
    <text evidence="1">Catalyzes the dehydration of methylthioribulose-1-phosphate (MTRu-1-P) into 2,3-diketo-5-methylthiopentyl-1-phosphate (DK-MTP-1-P).</text>
</comment>
<comment type="catalytic activity">
    <reaction evidence="1">
        <text>5-(methylsulfanyl)-D-ribulose 1-phosphate = 5-methylsulfanyl-2,3-dioxopentyl phosphate + H2O</text>
        <dbReference type="Rhea" id="RHEA:15549"/>
        <dbReference type="ChEBI" id="CHEBI:15377"/>
        <dbReference type="ChEBI" id="CHEBI:58548"/>
        <dbReference type="ChEBI" id="CHEBI:58828"/>
        <dbReference type="EC" id="4.2.1.109"/>
    </reaction>
</comment>
<comment type="cofactor">
    <cofactor evidence="1">
        <name>Zn(2+)</name>
        <dbReference type="ChEBI" id="CHEBI:29105"/>
    </cofactor>
    <text evidence="1">Binds 1 zinc ion per subunit.</text>
</comment>
<comment type="pathway">
    <text evidence="1">Amino-acid biosynthesis; L-methionine biosynthesis via salvage pathway; L-methionine from S-methyl-5-thio-alpha-D-ribose 1-phosphate: step 2/6.</text>
</comment>
<comment type="subcellular location">
    <subcellularLocation>
        <location evidence="1">Cytoplasm</location>
    </subcellularLocation>
</comment>
<comment type="similarity">
    <text evidence="1">Belongs to the aldolase class II family. MtnB subfamily.</text>
</comment>
<gene>
    <name type="ORF">GL19864</name>
</gene>
<dbReference type="EC" id="4.2.1.109" evidence="1"/>
<dbReference type="EMBL" id="CH479197">
    <property type="protein sequence ID" value="EDW27735.1"/>
    <property type="molecule type" value="Genomic_DNA"/>
</dbReference>
<dbReference type="RefSeq" id="XP_002023558.1">
    <property type="nucleotide sequence ID" value="XM_002023522.1"/>
</dbReference>
<dbReference type="SMR" id="B4GY79"/>
<dbReference type="STRING" id="7234.B4GY79"/>
<dbReference type="EnsemblMetazoa" id="FBtr0185479">
    <property type="protein sequence ID" value="FBpp0183971"/>
    <property type="gene ID" value="FBgn0157462"/>
</dbReference>
<dbReference type="eggNOG" id="KOG2631">
    <property type="taxonomic scope" value="Eukaryota"/>
</dbReference>
<dbReference type="HOGENOM" id="CLU_006033_4_0_1"/>
<dbReference type="OMA" id="SKCSDCA"/>
<dbReference type="OrthoDB" id="191080at2759"/>
<dbReference type="PhylomeDB" id="B4GY79"/>
<dbReference type="UniPathway" id="UPA00904">
    <property type="reaction ID" value="UER00875"/>
</dbReference>
<dbReference type="Proteomes" id="UP000008744">
    <property type="component" value="Unassembled WGS sequence"/>
</dbReference>
<dbReference type="GO" id="GO:0005737">
    <property type="term" value="C:cytoplasm"/>
    <property type="evidence" value="ECO:0007669"/>
    <property type="project" value="UniProtKB-SubCell"/>
</dbReference>
<dbReference type="GO" id="GO:0046570">
    <property type="term" value="F:methylthioribulose 1-phosphate dehydratase activity"/>
    <property type="evidence" value="ECO:0000250"/>
    <property type="project" value="UniProtKB"/>
</dbReference>
<dbReference type="GO" id="GO:0008270">
    <property type="term" value="F:zinc ion binding"/>
    <property type="evidence" value="ECO:0000250"/>
    <property type="project" value="UniProtKB"/>
</dbReference>
<dbReference type="GO" id="GO:0019509">
    <property type="term" value="P:L-methionine salvage from methylthioadenosine"/>
    <property type="evidence" value="ECO:0007669"/>
    <property type="project" value="UniProtKB-UniRule"/>
</dbReference>
<dbReference type="FunFam" id="3.40.225.10:FF:000003">
    <property type="entry name" value="Methylthioribulose-1-phosphate dehydratase"/>
    <property type="match status" value="1"/>
</dbReference>
<dbReference type="Gene3D" id="3.40.225.10">
    <property type="entry name" value="Class II aldolase/adducin N-terminal domain"/>
    <property type="match status" value="1"/>
</dbReference>
<dbReference type="HAMAP" id="MF_03116">
    <property type="entry name" value="Salvage_MtnB_euk"/>
    <property type="match status" value="1"/>
</dbReference>
<dbReference type="InterPro" id="IPR001303">
    <property type="entry name" value="Aldolase_II/adducin_N"/>
</dbReference>
<dbReference type="InterPro" id="IPR036409">
    <property type="entry name" value="Aldolase_II/adducin_N_sf"/>
</dbReference>
<dbReference type="InterPro" id="IPR017714">
    <property type="entry name" value="MethylthioRu-1-P_deHdtase_MtnB"/>
</dbReference>
<dbReference type="InterPro" id="IPR027514">
    <property type="entry name" value="Salvage_MtnB_euk"/>
</dbReference>
<dbReference type="NCBIfam" id="TIGR03328">
    <property type="entry name" value="salvage_mtnB"/>
    <property type="match status" value="1"/>
</dbReference>
<dbReference type="PANTHER" id="PTHR10640">
    <property type="entry name" value="METHYLTHIORIBULOSE-1-PHOSPHATE DEHYDRATASE"/>
    <property type="match status" value="1"/>
</dbReference>
<dbReference type="PANTHER" id="PTHR10640:SF7">
    <property type="entry name" value="METHYLTHIORIBULOSE-1-PHOSPHATE DEHYDRATASE"/>
    <property type="match status" value="1"/>
</dbReference>
<dbReference type="Pfam" id="PF00596">
    <property type="entry name" value="Aldolase_II"/>
    <property type="match status" value="1"/>
</dbReference>
<dbReference type="SMART" id="SM01007">
    <property type="entry name" value="Aldolase_II"/>
    <property type="match status" value="1"/>
</dbReference>
<dbReference type="SUPFAM" id="SSF53639">
    <property type="entry name" value="AraD/HMP-PK domain-like"/>
    <property type="match status" value="1"/>
</dbReference>
<feature type="chain" id="PRO_0000393785" description="Probable methylthioribulose-1-phosphate dehydratase">
    <location>
        <begin position="1"/>
        <end position="216"/>
    </location>
</feature>
<feature type="active site" description="Proton donor/acceptor" evidence="1">
    <location>
        <position position="129"/>
    </location>
</feature>
<feature type="binding site" evidence="1">
    <location>
        <position position="87"/>
    </location>
    <ligand>
        <name>substrate</name>
    </ligand>
</feature>
<feature type="binding site" evidence="1">
    <location>
        <position position="105"/>
    </location>
    <ligand>
        <name>Zn(2+)</name>
        <dbReference type="ChEBI" id="CHEBI:29105"/>
    </ligand>
</feature>
<feature type="binding site" evidence="1">
    <location>
        <position position="107"/>
    </location>
    <ligand>
        <name>Zn(2+)</name>
        <dbReference type="ChEBI" id="CHEBI:29105"/>
    </ligand>
</feature>
<reference key="1">
    <citation type="journal article" date="2007" name="Nature">
        <title>Evolution of genes and genomes on the Drosophila phylogeny.</title>
        <authorList>
            <consortium name="Drosophila 12 genomes consortium"/>
        </authorList>
    </citation>
    <scope>NUCLEOTIDE SEQUENCE [LARGE SCALE GENOMIC DNA]</scope>
    <source>
        <strain>MSH-3 / Tucson 14011-0111.49</strain>
    </source>
</reference>
<sequence>MSCSIFKDLPEDHPRRLIPALCRQFYHLGWVTGTGGGMSIKLNNEIYIAPSGVQKERMQPEDLFVQDIDGKDLQMPPEIRELKKSQCTPLFMLAYRHRNAGAVIHTHSQHAVMATLLWPGKTFRCTHLEMIKGVYDDADKRYLQYDEQLVVPIIENTPHERDLADSMYAGHDGASRLQCRSGQTPRSECSDYLFSIAVEMKMAGLDPETFVDASKA</sequence>
<proteinExistence type="inferred from homology"/>
<keyword id="KW-0028">Amino-acid biosynthesis</keyword>
<keyword id="KW-0963">Cytoplasm</keyword>
<keyword id="KW-0456">Lyase</keyword>
<keyword id="KW-0479">Metal-binding</keyword>
<keyword id="KW-0486">Methionine biosynthesis</keyword>
<keyword id="KW-1185">Reference proteome</keyword>
<keyword id="KW-0862">Zinc</keyword>